<comment type="function">
    <text evidence="2">Calmodulin acts as part of a calcium signal transduction pathway by mediating the control of a large number of enzymes, ion channels, aquaporins and other proteins through calcium-binding. Calcium-binding is required for the activation of calmodulin. Among the enzymes to be stimulated by the calmodulin-calcium complex are a number of protein kinases, such as myosin light-chain kinases and calmodulin-dependent protein kinase type II (CaMK2), and phosphatases. Together with CCP110 and centrin, is involved in a genetic pathway that regulates the centrosome cycle and progression through cytokinesis. Is a regulator of voltage-dependent L-type calcium channels. Mediates calcium-dependent inactivation of CACNA1C. Positively regulates calcium-activated potassium channel activity of KCNN2. Forms a potassium channel complex with KCNQ1 and regulates electrophysiological activity of the channel via calcium-binding. Acts as a sensor to modulate the endoplasmic reticulum contacts with other organelles mediated by VMP1:ATP2A2.</text>
</comment>
<comment type="subunit">
    <text evidence="2 3 5 6 7">Interacts with CEP97, CCP110, TTN/titin and SRY. Interacts with MYO5A and RRAD (By similarity). Interacts with USP6; the interaction is calcium dependent (By similarity). Interacts with CDK5RAP2. Interacts with SCN5A. Interacts with RYR1 and RYR2 (By similarity). Interacts with FCHO1. Interacts with MIP in a 1:2 stoichiometry; the interaction with the cytoplasmic domains from two MIP subunits promotes MIP water channel closure. Interacts with ORAI1; this may play a role in the regulation of ORAI1-mediated calcium transport. Interacts with SYT7 (By similarity). Interacts with MYO10 and MYO1C (By similarity). Interacts with SLC9A1 in a calcium-dependent manner (By similarity). Interacts with HINT1; interaction increases in the presence of calcium ions (By similarity). Interacts with HINT3 (By similarity).</text>
</comment>
<comment type="subcellular location">
    <subcellularLocation>
        <location evidence="1">Cytoplasm</location>
        <location evidence="1">Cytoskeleton</location>
        <location evidence="1">Spindle</location>
    </subcellularLocation>
    <subcellularLocation>
        <location evidence="1">Cytoplasm</location>
        <location evidence="1">Cytoskeleton</location>
        <location evidence="1">Spindle pole</location>
    </subcellularLocation>
    <text evidence="1">Distributed throughout the cell during interphase, but during mitosis becomes dramatically localized to the spindle poles and the spindle microtubules.</text>
</comment>
<comment type="PTM">
    <text evidence="1">Ubiquitination results in a strongly decreased activity.</text>
</comment>
<comment type="PTM">
    <text evidence="1">Phosphorylation results in a decreased activity.</text>
</comment>
<comment type="miscellaneous">
    <text>This protein has four functional calcium-binding sites.</text>
</comment>
<comment type="similarity">
    <text evidence="9">Belongs to the calmodulin family.</text>
</comment>
<evidence type="ECO:0000250" key="1"/>
<evidence type="ECO:0000250" key="2">
    <source>
        <dbReference type="UniProtKB" id="P0DP23"/>
    </source>
</evidence>
<evidence type="ECO:0000250" key="3">
    <source>
        <dbReference type="UniProtKB" id="P0DP26"/>
    </source>
</evidence>
<evidence type="ECO:0000250" key="4">
    <source>
        <dbReference type="UniProtKB" id="P0DP29"/>
    </source>
</evidence>
<evidence type="ECO:0000250" key="5">
    <source>
        <dbReference type="UniProtKB" id="P62157"/>
    </source>
</evidence>
<evidence type="ECO:0000250" key="6">
    <source>
        <dbReference type="UniProtKB" id="P62158"/>
    </source>
</evidence>
<evidence type="ECO:0000250" key="7">
    <source>
        <dbReference type="UniProtKB" id="P62204"/>
    </source>
</evidence>
<evidence type="ECO:0000255" key="8">
    <source>
        <dbReference type="PROSITE-ProRule" id="PRU00448"/>
    </source>
</evidence>
<evidence type="ECO:0000305" key="9"/>
<feature type="initiator methionine" description="Removed" evidence="5">
    <location>
        <position position="1"/>
    </location>
</feature>
<feature type="chain" id="PRO_0000198228" description="Calmodulin">
    <location>
        <begin position="2"/>
        <end position="149"/>
    </location>
</feature>
<feature type="domain" description="EF-hand 1" evidence="8">
    <location>
        <begin position="8"/>
        <end position="43"/>
    </location>
</feature>
<feature type="domain" description="EF-hand 2" evidence="8">
    <location>
        <begin position="44"/>
        <end position="79"/>
    </location>
</feature>
<feature type="domain" description="EF-hand 3" evidence="8">
    <location>
        <begin position="81"/>
        <end position="116"/>
    </location>
</feature>
<feature type="domain" description="EF-hand 4" evidence="8">
    <location>
        <begin position="117"/>
        <end position="149"/>
    </location>
</feature>
<feature type="binding site" evidence="8">
    <location>
        <position position="21"/>
    </location>
    <ligand>
        <name>Ca(2+)</name>
        <dbReference type="ChEBI" id="CHEBI:29108"/>
        <label>1</label>
    </ligand>
</feature>
<feature type="binding site" evidence="8">
    <location>
        <position position="23"/>
    </location>
    <ligand>
        <name>Ca(2+)</name>
        <dbReference type="ChEBI" id="CHEBI:29108"/>
        <label>1</label>
    </ligand>
</feature>
<feature type="binding site" evidence="8">
    <location>
        <position position="25"/>
    </location>
    <ligand>
        <name>Ca(2+)</name>
        <dbReference type="ChEBI" id="CHEBI:29108"/>
        <label>1</label>
    </ligand>
</feature>
<feature type="binding site" evidence="8">
    <location>
        <position position="27"/>
    </location>
    <ligand>
        <name>Ca(2+)</name>
        <dbReference type="ChEBI" id="CHEBI:29108"/>
        <label>1</label>
    </ligand>
</feature>
<feature type="binding site" evidence="8">
    <location>
        <position position="32"/>
    </location>
    <ligand>
        <name>Ca(2+)</name>
        <dbReference type="ChEBI" id="CHEBI:29108"/>
        <label>1</label>
    </ligand>
</feature>
<feature type="binding site" evidence="8">
    <location>
        <position position="57"/>
    </location>
    <ligand>
        <name>Ca(2+)</name>
        <dbReference type="ChEBI" id="CHEBI:29108"/>
        <label>2</label>
    </ligand>
</feature>
<feature type="binding site" evidence="8">
    <location>
        <position position="59"/>
    </location>
    <ligand>
        <name>Ca(2+)</name>
        <dbReference type="ChEBI" id="CHEBI:29108"/>
        <label>2</label>
    </ligand>
</feature>
<feature type="binding site" evidence="8">
    <location>
        <position position="61"/>
    </location>
    <ligand>
        <name>Ca(2+)</name>
        <dbReference type="ChEBI" id="CHEBI:29108"/>
        <label>2</label>
    </ligand>
</feature>
<feature type="binding site" evidence="8">
    <location>
        <position position="63"/>
    </location>
    <ligand>
        <name>Ca(2+)</name>
        <dbReference type="ChEBI" id="CHEBI:29108"/>
        <label>2</label>
    </ligand>
</feature>
<feature type="binding site" evidence="8">
    <location>
        <position position="68"/>
    </location>
    <ligand>
        <name>Ca(2+)</name>
        <dbReference type="ChEBI" id="CHEBI:29108"/>
        <label>2</label>
    </ligand>
</feature>
<feature type="binding site" evidence="8">
    <location>
        <position position="94"/>
    </location>
    <ligand>
        <name>Ca(2+)</name>
        <dbReference type="ChEBI" id="CHEBI:29108"/>
        <label>3</label>
    </ligand>
</feature>
<feature type="binding site" evidence="8">
    <location>
        <position position="96"/>
    </location>
    <ligand>
        <name>Ca(2+)</name>
        <dbReference type="ChEBI" id="CHEBI:29108"/>
        <label>3</label>
    </ligand>
</feature>
<feature type="binding site" evidence="8">
    <location>
        <position position="98"/>
    </location>
    <ligand>
        <name>Ca(2+)</name>
        <dbReference type="ChEBI" id="CHEBI:29108"/>
        <label>3</label>
    </ligand>
</feature>
<feature type="binding site" evidence="8">
    <location>
        <position position="100"/>
    </location>
    <ligand>
        <name>Ca(2+)</name>
        <dbReference type="ChEBI" id="CHEBI:29108"/>
        <label>3</label>
    </ligand>
</feature>
<feature type="binding site" evidence="8">
    <location>
        <position position="105"/>
    </location>
    <ligand>
        <name>Ca(2+)</name>
        <dbReference type="ChEBI" id="CHEBI:29108"/>
        <label>3</label>
    </ligand>
</feature>
<feature type="binding site" evidence="8">
    <location>
        <position position="130"/>
    </location>
    <ligand>
        <name>Ca(2+)</name>
        <dbReference type="ChEBI" id="CHEBI:29108"/>
        <label>4</label>
    </ligand>
</feature>
<feature type="binding site" evidence="8">
    <location>
        <position position="132"/>
    </location>
    <ligand>
        <name>Ca(2+)</name>
        <dbReference type="ChEBI" id="CHEBI:29108"/>
        <label>4</label>
    </ligand>
</feature>
<feature type="binding site" evidence="8">
    <location>
        <position position="134"/>
    </location>
    <ligand>
        <name>Ca(2+)</name>
        <dbReference type="ChEBI" id="CHEBI:29108"/>
        <label>4</label>
    </ligand>
</feature>
<feature type="binding site" evidence="8">
    <location>
        <position position="136"/>
    </location>
    <ligand>
        <name>Ca(2+)</name>
        <dbReference type="ChEBI" id="CHEBI:29108"/>
        <label>4</label>
    </ligand>
</feature>
<feature type="binding site" evidence="8">
    <location>
        <position position="141"/>
    </location>
    <ligand>
        <name>Ca(2+)</name>
        <dbReference type="ChEBI" id="CHEBI:29108"/>
        <label>4</label>
    </ligand>
</feature>
<feature type="modified residue" description="N-acetylalanine" evidence="5">
    <location>
        <position position="2"/>
    </location>
</feature>
<feature type="modified residue" description="N6-acetyllysine; alternate" evidence="2">
    <location>
        <position position="22"/>
    </location>
</feature>
<feature type="modified residue" description="Phosphothreonine; by CaMK4" evidence="4">
    <location>
        <position position="45"/>
    </location>
</feature>
<feature type="modified residue" description="Phosphoserine" evidence="2">
    <location>
        <position position="82"/>
    </location>
</feature>
<feature type="modified residue" description="N6-acetyllysine" evidence="2">
    <location>
        <position position="95"/>
    </location>
</feature>
<feature type="modified residue" description="Phosphotyrosine" evidence="2">
    <location>
        <position position="100"/>
    </location>
</feature>
<feature type="modified residue" description="Phosphoserine" evidence="2">
    <location>
        <position position="102"/>
    </location>
</feature>
<feature type="modified residue" description="Phosphothreonine" evidence="2">
    <location>
        <position position="111"/>
    </location>
</feature>
<feature type="modified residue" description="N6,N6,N6-trimethyllysine; alternate" evidence="5">
    <location>
        <position position="116"/>
    </location>
</feature>
<feature type="modified residue" description="N6-methyllysine; alternate" evidence="2">
    <location>
        <position position="116"/>
    </location>
</feature>
<feature type="modified residue" description="Phosphotyrosine" evidence="2">
    <location>
        <position position="139"/>
    </location>
</feature>
<feature type="cross-link" description="Glycyl lysine isopeptide (Lys-Gly) (interchain with G-Cter in SUMO2); alternate" evidence="2">
    <location>
        <position position="22"/>
    </location>
</feature>
<feature type="cross-link" description="Glycyl lysine isopeptide (Lys-Gly) (interchain with G-Cter in ubiquitin); alternate" evidence="5">
    <location>
        <position position="22"/>
    </location>
</feature>
<reference key="1">
    <citation type="journal article" date="2002" name="Am. J. Physiol.">
        <title>Increased expansion of the lung stimulates calmodulin 2 expression in fetal sheep.</title>
        <authorList>
            <person name="Gillett A.M."/>
            <person name="Wallace M.J."/>
            <person name="Gillespie M.T."/>
            <person name="Hooper S.B."/>
        </authorList>
    </citation>
    <scope>NUCLEOTIDE SEQUENCE [MRNA]</scope>
</reference>
<organism>
    <name type="scientific">Ovis aries</name>
    <name type="common">Sheep</name>
    <dbReference type="NCBI Taxonomy" id="9940"/>
    <lineage>
        <taxon>Eukaryota</taxon>
        <taxon>Metazoa</taxon>
        <taxon>Chordata</taxon>
        <taxon>Craniata</taxon>
        <taxon>Vertebrata</taxon>
        <taxon>Euteleostomi</taxon>
        <taxon>Mammalia</taxon>
        <taxon>Eutheria</taxon>
        <taxon>Laurasiatheria</taxon>
        <taxon>Artiodactyla</taxon>
        <taxon>Ruminantia</taxon>
        <taxon>Pecora</taxon>
        <taxon>Bovidae</taxon>
        <taxon>Caprinae</taxon>
        <taxon>Ovis</taxon>
    </lineage>
</organism>
<protein>
    <recommendedName>
        <fullName>Calmodulin</fullName>
        <shortName>CaM</shortName>
    </recommendedName>
</protein>
<name>CALM_SHEEP</name>
<proteinExistence type="evidence at transcript level"/>
<keyword id="KW-0007">Acetylation</keyword>
<keyword id="KW-0106">Calcium</keyword>
<keyword id="KW-0963">Cytoplasm</keyword>
<keyword id="KW-0206">Cytoskeleton</keyword>
<keyword id="KW-1017">Isopeptide bond</keyword>
<keyword id="KW-0479">Metal-binding</keyword>
<keyword id="KW-0488">Methylation</keyword>
<keyword id="KW-0597">Phosphoprotein</keyword>
<keyword id="KW-1185">Reference proteome</keyword>
<keyword id="KW-0677">Repeat</keyword>
<keyword id="KW-0832">Ubl conjugation</keyword>
<sequence length="149" mass="16838">MADQLTEEQIAEFKEAFSLFDKDGDGTITTKELGTVMRSLGQNPTEAELQDMINEVDADGNGTIDFPEFLTMMARKMKDTDSEEEIREAFRVFDKDGNGYISAAELRHVMTNLGEKLTDEEVDEMIREADIDGDGQVNYEEFVQMMTAK</sequence>
<gene>
    <name type="primary">CALM2</name>
</gene>
<dbReference type="EMBL" id="AY046946">
    <property type="protein sequence ID" value="AAL02363.1"/>
    <property type="molecule type" value="mRNA"/>
</dbReference>
<dbReference type="RefSeq" id="NP_001009759.1">
    <property type="nucleotide sequence ID" value="NM_001009759.1"/>
</dbReference>
<dbReference type="SMR" id="Q6YNX6"/>
<dbReference type="STRING" id="9940.ENSOARP00000011414"/>
<dbReference type="iPTMnet" id="Q6YNX6"/>
<dbReference type="PaxDb" id="9940-ENSOARP00000011414"/>
<dbReference type="Ensembl" id="ENSOART00215019257">
    <property type="protein sequence ID" value="ENSOARP00215009691"/>
    <property type="gene ID" value="ENSOARG00215011603"/>
</dbReference>
<dbReference type="Ensembl" id="ENSOART00220040579">
    <property type="protein sequence ID" value="ENSOARP00220021905"/>
    <property type="gene ID" value="ENSOARG00220024320"/>
</dbReference>
<dbReference type="GeneID" id="443230"/>
<dbReference type="KEGG" id="oas:101116338"/>
<dbReference type="KEGG" id="oas:443230"/>
<dbReference type="CTD" id="805"/>
<dbReference type="CTD" id="808"/>
<dbReference type="eggNOG" id="KOG0027">
    <property type="taxonomic scope" value="Eukaryota"/>
</dbReference>
<dbReference type="HOGENOM" id="CLU_061288_2_0_1"/>
<dbReference type="OMA" id="RIDCESI"/>
<dbReference type="OrthoDB" id="9695450at2759"/>
<dbReference type="Proteomes" id="UP000002356">
    <property type="component" value="Chromosome 14"/>
</dbReference>
<dbReference type="Bgee" id="ENSOARG00000010640">
    <property type="expression patterns" value="Expressed in cerebellum and 52 other cell types or tissues"/>
</dbReference>
<dbReference type="GO" id="GO:0005737">
    <property type="term" value="C:cytoplasm"/>
    <property type="evidence" value="ECO:0007669"/>
    <property type="project" value="UniProtKB-KW"/>
</dbReference>
<dbReference type="GO" id="GO:0016460">
    <property type="term" value="C:myosin II complex"/>
    <property type="evidence" value="ECO:0007669"/>
    <property type="project" value="TreeGrafter"/>
</dbReference>
<dbReference type="GO" id="GO:0000922">
    <property type="term" value="C:spindle pole"/>
    <property type="evidence" value="ECO:0007669"/>
    <property type="project" value="UniProtKB-SubCell"/>
</dbReference>
<dbReference type="GO" id="GO:0005509">
    <property type="term" value="F:calcium ion binding"/>
    <property type="evidence" value="ECO:0000250"/>
    <property type="project" value="UniProtKB"/>
</dbReference>
<dbReference type="CDD" id="cd00051">
    <property type="entry name" value="EFh"/>
    <property type="match status" value="2"/>
</dbReference>
<dbReference type="FunFam" id="1.10.238.10:FF:000527">
    <property type="entry name" value="Calmodulin-3"/>
    <property type="match status" value="1"/>
</dbReference>
<dbReference type="Gene3D" id="1.10.238.10">
    <property type="entry name" value="EF-hand"/>
    <property type="match status" value="3"/>
</dbReference>
<dbReference type="InterPro" id="IPR050230">
    <property type="entry name" value="CALM/Myosin/TropC-like"/>
</dbReference>
<dbReference type="InterPro" id="IPR011992">
    <property type="entry name" value="EF-hand-dom_pair"/>
</dbReference>
<dbReference type="InterPro" id="IPR018247">
    <property type="entry name" value="EF_Hand_1_Ca_BS"/>
</dbReference>
<dbReference type="InterPro" id="IPR002048">
    <property type="entry name" value="EF_hand_dom"/>
</dbReference>
<dbReference type="PANTHER" id="PTHR23048:SF0">
    <property type="entry name" value="CALMODULIN LIKE 3"/>
    <property type="match status" value="1"/>
</dbReference>
<dbReference type="PANTHER" id="PTHR23048">
    <property type="entry name" value="MYOSIN LIGHT CHAIN 1, 3"/>
    <property type="match status" value="1"/>
</dbReference>
<dbReference type="Pfam" id="PF13499">
    <property type="entry name" value="EF-hand_7"/>
    <property type="match status" value="2"/>
</dbReference>
<dbReference type="PRINTS" id="PR00450">
    <property type="entry name" value="RECOVERIN"/>
</dbReference>
<dbReference type="SMART" id="SM00054">
    <property type="entry name" value="EFh"/>
    <property type="match status" value="4"/>
</dbReference>
<dbReference type="SUPFAM" id="SSF47473">
    <property type="entry name" value="EF-hand"/>
    <property type="match status" value="1"/>
</dbReference>
<dbReference type="PROSITE" id="PS00018">
    <property type="entry name" value="EF_HAND_1"/>
    <property type="match status" value="4"/>
</dbReference>
<dbReference type="PROSITE" id="PS50222">
    <property type="entry name" value="EF_HAND_2"/>
    <property type="match status" value="4"/>
</dbReference>
<accession>Q6YNX6</accession>